<organism>
    <name type="scientific">Chelativorans sp. (strain BNC1)</name>
    <dbReference type="NCBI Taxonomy" id="266779"/>
    <lineage>
        <taxon>Bacteria</taxon>
        <taxon>Pseudomonadati</taxon>
        <taxon>Pseudomonadota</taxon>
        <taxon>Alphaproteobacteria</taxon>
        <taxon>Hyphomicrobiales</taxon>
        <taxon>Phyllobacteriaceae</taxon>
        <taxon>Chelativorans</taxon>
    </lineage>
</organism>
<proteinExistence type="inferred from homology"/>
<keyword id="KW-0031">Aminopeptidase</keyword>
<keyword id="KW-0963">Cytoplasm</keyword>
<keyword id="KW-0378">Hydrolase</keyword>
<keyword id="KW-0464">Manganese</keyword>
<keyword id="KW-0479">Metal-binding</keyword>
<keyword id="KW-0645">Protease</keyword>
<protein>
    <recommendedName>
        <fullName evidence="1">Probable cytosol aminopeptidase</fullName>
        <ecNumber evidence="1">3.4.11.1</ecNumber>
    </recommendedName>
    <alternativeName>
        <fullName evidence="1">Leucine aminopeptidase</fullName>
        <shortName evidence="1">LAP</shortName>
        <ecNumber evidence="1">3.4.11.10</ecNumber>
    </alternativeName>
    <alternativeName>
        <fullName evidence="1">Leucyl aminopeptidase</fullName>
    </alternativeName>
</protein>
<gene>
    <name evidence="1" type="primary">pepA</name>
    <name type="ordered locus">Meso_1756</name>
</gene>
<sequence>MTEKPTIAFAKFAAPKKGSVILLVPEGGNLGQAATAADPAGVMPKVFAAAEFKGKLAATVEALAPQGTAYDRVAVIGTGNPSALTEQSWLQIGGAAAAAAKNAGEVTVIADVAGLELSAREAANIGLGILLRSYVFDKYKTRRDENGIKARDKKFTIQCADPNAAKKAFAEASALGDGVYLARDLVNEPANVLGPVEFAAQAKALESLGVKVDVLTEREMKKLGMGALLGVAQGSVRPPRLVVMQWNGGKPKQKPVAFVGKGVVFDTGGISIKPAASMEDMKGDMAGAAAVVGLMHALAARKAKTNAVGIIGLVENMPDGNAQRPGDIVTSMSGQTIEIINTDAEGRLVLADALWYCKEQFKPQFMVNLATLTGAIIVALGNSHAGLFSNDDTLSERLTAAGQATGEKVWRMPLGSEYDKLIDTKNADMKNTGGRQAGSITAAQFLKRFVDDTPWAHLDVAGTAMGSPSSEINQSWASGFGVRLLDRLVADHYEG</sequence>
<dbReference type="EC" id="3.4.11.1" evidence="1"/>
<dbReference type="EC" id="3.4.11.10" evidence="1"/>
<dbReference type="EMBL" id="CP000390">
    <property type="protein sequence ID" value="ABG63150.1"/>
    <property type="molecule type" value="Genomic_DNA"/>
</dbReference>
<dbReference type="SMR" id="Q11HH5"/>
<dbReference type="STRING" id="266779.Meso_1756"/>
<dbReference type="KEGG" id="mes:Meso_1756"/>
<dbReference type="eggNOG" id="COG0260">
    <property type="taxonomic scope" value="Bacteria"/>
</dbReference>
<dbReference type="HOGENOM" id="CLU_013734_6_0_5"/>
<dbReference type="OrthoDB" id="9809354at2"/>
<dbReference type="GO" id="GO:0005737">
    <property type="term" value="C:cytoplasm"/>
    <property type="evidence" value="ECO:0007669"/>
    <property type="project" value="UniProtKB-SubCell"/>
</dbReference>
<dbReference type="GO" id="GO:0030145">
    <property type="term" value="F:manganese ion binding"/>
    <property type="evidence" value="ECO:0007669"/>
    <property type="project" value="UniProtKB-UniRule"/>
</dbReference>
<dbReference type="GO" id="GO:0070006">
    <property type="term" value="F:metalloaminopeptidase activity"/>
    <property type="evidence" value="ECO:0007669"/>
    <property type="project" value="InterPro"/>
</dbReference>
<dbReference type="GO" id="GO:0006508">
    <property type="term" value="P:proteolysis"/>
    <property type="evidence" value="ECO:0007669"/>
    <property type="project" value="UniProtKB-KW"/>
</dbReference>
<dbReference type="CDD" id="cd00433">
    <property type="entry name" value="Peptidase_M17"/>
    <property type="match status" value="1"/>
</dbReference>
<dbReference type="Gene3D" id="3.40.220.10">
    <property type="entry name" value="Leucine Aminopeptidase, subunit E, domain 1"/>
    <property type="match status" value="1"/>
</dbReference>
<dbReference type="Gene3D" id="3.40.630.10">
    <property type="entry name" value="Zn peptidases"/>
    <property type="match status" value="1"/>
</dbReference>
<dbReference type="HAMAP" id="MF_00181">
    <property type="entry name" value="Cytosol_peptidase_M17"/>
    <property type="match status" value="1"/>
</dbReference>
<dbReference type="InterPro" id="IPR011356">
    <property type="entry name" value="Leucine_aapep/pepB"/>
</dbReference>
<dbReference type="InterPro" id="IPR043472">
    <property type="entry name" value="Macro_dom-like"/>
</dbReference>
<dbReference type="InterPro" id="IPR000819">
    <property type="entry name" value="Peptidase_M17_C"/>
</dbReference>
<dbReference type="InterPro" id="IPR023042">
    <property type="entry name" value="Peptidase_M17_leu_NH2_pept"/>
</dbReference>
<dbReference type="InterPro" id="IPR008283">
    <property type="entry name" value="Peptidase_M17_N"/>
</dbReference>
<dbReference type="NCBIfam" id="NF002073">
    <property type="entry name" value="PRK00913.1-2"/>
    <property type="match status" value="1"/>
</dbReference>
<dbReference type="NCBIfam" id="NF002074">
    <property type="entry name" value="PRK00913.1-4"/>
    <property type="match status" value="1"/>
</dbReference>
<dbReference type="NCBIfam" id="NF002075">
    <property type="entry name" value="PRK00913.2-2"/>
    <property type="match status" value="1"/>
</dbReference>
<dbReference type="NCBIfam" id="NF002077">
    <property type="entry name" value="PRK00913.2-4"/>
    <property type="match status" value="1"/>
</dbReference>
<dbReference type="NCBIfam" id="NF002083">
    <property type="entry name" value="PRK00913.3-5"/>
    <property type="match status" value="1"/>
</dbReference>
<dbReference type="PANTHER" id="PTHR11963:SF23">
    <property type="entry name" value="CYTOSOL AMINOPEPTIDASE"/>
    <property type="match status" value="1"/>
</dbReference>
<dbReference type="PANTHER" id="PTHR11963">
    <property type="entry name" value="LEUCINE AMINOPEPTIDASE-RELATED"/>
    <property type="match status" value="1"/>
</dbReference>
<dbReference type="Pfam" id="PF00883">
    <property type="entry name" value="Peptidase_M17"/>
    <property type="match status" value="1"/>
</dbReference>
<dbReference type="Pfam" id="PF02789">
    <property type="entry name" value="Peptidase_M17_N"/>
    <property type="match status" value="1"/>
</dbReference>
<dbReference type="PRINTS" id="PR00481">
    <property type="entry name" value="LAMNOPPTDASE"/>
</dbReference>
<dbReference type="SUPFAM" id="SSF52949">
    <property type="entry name" value="Macro domain-like"/>
    <property type="match status" value="1"/>
</dbReference>
<dbReference type="SUPFAM" id="SSF53187">
    <property type="entry name" value="Zn-dependent exopeptidases"/>
    <property type="match status" value="1"/>
</dbReference>
<dbReference type="PROSITE" id="PS00631">
    <property type="entry name" value="CYTOSOL_AP"/>
    <property type="match status" value="1"/>
</dbReference>
<evidence type="ECO:0000255" key="1">
    <source>
        <dbReference type="HAMAP-Rule" id="MF_00181"/>
    </source>
</evidence>
<reference key="1">
    <citation type="submission" date="2006-06" db="EMBL/GenBank/DDBJ databases">
        <title>Complete sequence of chromosome of Mesorhizobium sp. BNC1.</title>
        <authorList>
            <consortium name="US DOE Joint Genome Institute"/>
            <person name="Copeland A."/>
            <person name="Lucas S."/>
            <person name="Lapidus A."/>
            <person name="Barry K."/>
            <person name="Detter J.C."/>
            <person name="Glavina del Rio T."/>
            <person name="Hammon N."/>
            <person name="Israni S."/>
            <person name="Dalin E."/>
            <person name="Tice H."/>
            <person name="Pitluck S."/>
            <person name="Chertkov O."/>
            <person name="Brettin T."/>
            <person name="Bruce D."/>
            <person name="Han C."/>
            <person name="Tapia R."/>
            <person name="Gilna P."/>
            <person name="Schmutz J."/>
            <person name="Larimer F."/>
            <person name="Land M."/>
            <person name="Hauser L."/>
            <person name="Kyrpides N."/>
            <person name="Mikhailova N."/>
            <person name="Richardson P."/>
        </authorList>
    </citation>
    <scope>NUCLEOTIDE SEQUENCE [LARGE SCALE GENOMIC DNA]</scope>
    <source>
        <strain>BNC1</strain>
    </source>
</reference>
<accession>Q11HH5</accession>
<feature type="chain" id="PRO_1000019933" description="Probable cytosol aminopeptidase">
    <location>
        <begin position="1"/>
        <end position="495"/>
    </location>
</feature>
<feature type="active site" evidence="1">
    <location>
        <position position="273"/>
    </location>
</feature>
<feature type="active site" evidence="1">
    <location>
        <position position="347"/>
    </location>
</feature>
<feature type="binding site" evidence="1">
    <location>
        <position position="261"/>
    </location>
    <ligand>
        <name>Mn(2+)</name>
        <dbReference type="ChEBI" id="CHEBI:29035"/>
        <label>2</label>
    </ligand>
</feature>
<feature type="binding site" evidence="1">
    <location>
        <position position="266"/>
    </location>
    <ligand>
        <name>Mn(2+)</name>
        <dbReference type="ChEBI" id="CHEBI:29035"/>
        <label>1</label>
    </ligand>
</feature>
<feature type="binding site" evidence="1">
    <location>
        <position position="266"/>
    </location>
    <ligand>
        <name>Mn(2+)</name>
        <dbReference type="ChEBI" id="CHEBI:29035"/>
        <label>2</label>
    </ligand>
</feature>
<feature type="binding site" evidence="1">
    <location>
        <position position="284"/>
    </location>
    <ligand>
        <name>Mn(2+)</name>
        <dbReference type="ChEBI" id="CHEBI:29035"/>
        <label>2</label>
    </ligand>
</feature>
<feature type="binding site" evidence="1">
    <location>
        <position position="343"/>
    </location>
    <ligand>
        <name>Mn(2+)</name>
        <dbReference type="ChEBI" id="CHEBI:29035"/>
        <label>1</label>
    </ligand>
</feature>
<feature type="binding site" evidence="1">
    <location>
        <position position="345"/>
    </location>
    <ligand>
        <name>Mn(2+)</name>
        <dbReference type="ChEBI" id="CHEBI:29035"/>
        <label>1</label>
    </ligand>
</feature>
<feature type="binding site" evidence="1">
    <location>
        <position position="345"/>
    </location>
    <ligand>
        <name>Mn(2+)</name>
        <dbReference type="ChEBI" id="CHEBI:29035"/>
        <label>2</label>
    </ligand>
</feature>
<name>AMPA_CHESB</name>
<comment type="function">
    <text evidence="1">Presumably involved in the processing and regular turnover of intracellular proteins. Catalyzes the removal of unsubstituted N-terminal amino acids from various peptides.</text>
</comment>
<comment type="catalytic activity">
    <reaction evidence="1">
        <text>Release of an N-terminal amino acid, Xaa-|-Yaa-, in which Xaa is preferably Leu, but may be other amino acids including Pro although not Arg or Lys, and Yaa may be Pro. Amino acid amides and methyl esters are also readily hydrolyzed, but rates on arylamides are exceedingly low.</text>
        <dbReference type="EC" id="3.4.11.1"/>
    </reaction>
</comment>
<comment type="catalytic activity">
    <reaction evidence="1">
        <text>Release of an N-terminal amino acid, preferentially leucine, but not glutamic or aspartic acids.</text>
        <dbReference type="EC" id="3.4.11.10"/>
    </reaction>
</comment>
<comment type="cofactor">
    <cofactor evidence="1">
        <name>Mn(2+)</name>
        <dbReference type="ChEBI" id="CHEBI:29035"/>
    </cofactor>
    <text evidence="1">Binds 2 manganese ions per subunit.</text>
</comment>
<comment type="subcellular location">
    <subcellularLocation>
        <location evidence="1">Cytoplasm</location>
    </subcellularLocation>
</comment>
<comment type="similarity">
    <text evidence="1">Belongs to the peptidase M17 family.</text>
</comment>